<organism>
    <name type="scientific">Drosophila melanogaster</name>
    <name type="common">Fruit fly</name>
    <dbReference type="NCBI Taxonomy" id="7227"/>
    <lineage>
        <taxon>Eukaryota</taxon>
        <taxon>Metazoa</taxon>
        <taxon>Ecdysozoa</taxon>
        <taxon>Arthropoda</taxon>
        <taxon>Hexapoda</taxon>
        <taxon>Insecta</taxon>
        <taxon>Pterygota</taxon>
        <taxon>Neoptera</taxon>
        <taxon>Endopterygota</taxon>
        <taxon>Diptera</taxon>
        <taxon>Brachycera</taxon>
        <taxon>Muscomorpha</taxon>
        <taxon>Ephydroidea</taxon>
        <taxon>Drosophilidae</taxon>
        <taxon>Drosophila</taxon>
        <taxon>Sophophora</taxon>
    </lineage>
</organism>
<dbReference type="EC" id="2.7.11.22"/>
<dbReference type="EMBL" id="X99513">
    <property type="protein sequence ID" value="CAA67863.1"/>
    <property type="molecule type" value="mRNA"/>
</dbReference>
<dbReference type="EMBL" id="AE014296">
    <property type="protein sequence ID" value="AAF51635.1"/>
    <property type="molecule type" value="Genomic_DNA"/>
</dbReference>
<dbReference type="EMBL" id="AE014296">
    <property type="protein sequence ID" value="AAN12141.1"/>
    <property type="molecule type" value="Genomic_DNA"/>
</dbReference>
<dbReference type="EMBL" id="BT016092">
    <property type="protein sequence ID" value="AAV36977.1"/>
    <property type="molecule type" value="mRNA"/>
</dbReference>
<dbReference type="EMBL" id="AY128425">
    <property type="protein sequence ID" value="AAM75018.1"/>
    <property type="status" value="ALT_SEQ"/>
    <property type="molecule type" value="mRNA"/>
</dbReference>
<dbReference type="RefSeq" id="NP_001246851.1">
    <property type="nucleotide sequence ID" value="NM_001259922.2"/>
</dbReference>
<dbReference type="RefSeq" id="NP_001246852.1">
    <property type="nucleotide sequence ID" value="NM_001259923.2"/>
</dbReference>
<dbReference type="RefSeq" id="NP_001262122.1">
    <property type="nucleotide sequence ID" value="NM_001275193.1"/>
</dbReference>
<dbReference type="RefSeq" id="NP_649251.2">
    <property type="nucleotide sequence ID" value="NM_140994.4"/>
</dbReference>
<dbReference type="RefSeq" id="NP_730563.1">
    <property type="nucleotide sequence ID" value="NM_168869.3"/>
</dbReference>
<dbReference type="SMR" id="Q9VPC0"/>
<dbReference type="BioGRID" id="65549">
    <property type="interactions" value="9"/>
</dbReference>
<dbReference type="FunCoup" id="Q9VPC0">
    <property type="interactions" value="526"/>
</dbReference>
<dbReference type="IntAct" id="Q9VPC0">
    <property type="interactions" value="12"/>
</dbReference>
<dbReference type="STRING" id="7227.FBpp0077905"/>
<dbReference type="iPTMnet" id="Q9VPC0"/>
<dbReference type="PaxDb" id="7227-FBpp0077905"/>
<dbReference type="DNASU" id="40292"/>
<dbReference type="EnsemblMetazoa" id="FBtr0078247">
    <property type="protein sequence ID" value="FBpp0077905"/>
    <property type="gene ID" value="FBgn0016696"/>
</dbReference>
<dbReference type="EnsemblMetazoa" id="FBtr0078250">
    <property type="protein sequence ID" value="FBpp0077908"/>
    <property type="gene ID" value="FBgn0016696"/>
</dbReference>
<dbReference type="GeneID" id="40292"/>
<dbReference type="KEGG" id="dme:Dmel_CG4268"/>
<dbReference type="UCSC" id="CG4268-RC">
    <property type="organism name" value="d. melanogaster"/>
</dbReference>
<dbReference type="AGR" id="FB:FBgn0016696"/>
<dbReference type="CTD" id="40292"/>
<dbReference type="FlyBase" id="FBgn0016696">
    <property type="gene designation" value="Pitslre"/>
</dbReference>
<dbReference type="VEuPathDB" id="VectorBase:FBgn0016696"/>
<dbReference type="eggNOG" id="KOG0663">
    <property type="taxonomic scope" value="Eukaryota"/>
</dbReference>
<dbReference type="GeneTree" id="ENSGT00940000158459"/>
<dbReference type="InParanoid" id="Q9VPC0"/>
<dbReference type="OMA" id="HRYEYRN"/>
<dbReference type="OrthoDB" id="647at2759"/>
<dbReference type="PhylomeDB" id="Q9VPC0"/>
<dbReference type="BRENDA" id="2.7.11.22">
    <property type="organism ID" value="1994"/>
</dbReference>
<dbReference type="BioGRID-ORCS" id="40292">
    <property type="hits" value="1 hit in 3 CRISPR screens"/>
</dbReference>
<dbReference type="GenomeRNAi" id="40292"/>
<dbReference type="PRO" id="PR:Q9VPC0"/>
<dbReference type="Proteomes" id="UP000000803">
    <property type="component" value="Chromosome 3L"/>
</dbReference>
<dbReference type="Bgee" id="FBgn0016696">
    <property type="expression patterns" value="Expressed in lamina monopolar neuron L5 (Drosophila) in insect head and 319 other cell types or tissues"/>
</dbReference>
<dbReference type="ExpressionAtlas" id="Q9VPC0">
    <property type="expression patterns" value="baseline and differential"/>
</dbReference>
<dbReference type="GO" id="GO:0005634">
    <property type="term" value="C:nucleus"/>
    <property type="evidence" value="ECO:0000318"/>
    <property type="project" value="GO_Central"/>
</dbReference>
<dbReference type="GO" id="GO:0005524">
    <property type="term" value="F:ATP binding"/>
    <property type="evidence" value="ECO:0007669"/>
    <property type="project" value="UniProtKB-KW"/>
</dbReference>
<dbReference type="GO" id="GO:0004693">
    <property type="term" value="F:cyclin-dependent protein serine/threonine kinase activity"/>
    <property type="evidence" value="ECO:0000250"/>
    <property type="project" value="FlyBase"/>
</dbReference>
<dbReference type="GO" id="GO:0106310">
    <property type="term" value="F:protein serine kinase activity"/>
    <property type="evidence" value="ECO:0007669"/>
    <property type="project" value="RHEA"/>
</dbReference>
<dbReference type="GO" id="GO:0004674">
    <property type="term" value="F:protein serine/threonine kinase activity"/>
    <property type="evidence" value="ECO:0000250"/>
    <property type="project" value="FlyBase"/>
</dbReference>
<dbReference type="GO" id="GO:0004713">
    <property type="term" value="F:protein tyrosine kinase activity"/>
    <property type="evidence" value="ECO:0007669"/>
    <property type="project" value="RHEA"/>
</dbReference>
<dbReference type="GO" id="GO:0002225">
    <property type="term" value="P:positive regulation of antimicrobial peptide production"/>
    <property type="evidence" value="ECO:0000315"/>
    <property type="project" value="FlyBase"/>
</dbReference>
<dbReference type="GO" id="GO:0045752">
    <property type="term" value="P:positive regulation of Toll signaling pathway"/>
    <property type="evidence" value="ECO:0000315"/>
    <property type="project" value="FlyBase"/>
</dbReference>
<dbReference type="GO" id="GO:0051726">
    <property type="term" value="P:regulation of cell cycle"/>
    <property type="evidence" value="ECO:0000318"/>
    <property type="project" value="GO_Central"/>
</dbReference>
<dbReference type="CDD" id="cd07843">
    <property type="entry name" value="STKc_CDC2L1"/>
    <property type="match status" value="1"/>
</dbReference>
<dbReference type="FunFam" id="3.30.200.20:FF:000054">
    <property type="entry name" value="Cyclin-dependent kinase 11B"/>
    <property type="match status" value="1"/>
</dbReference>
<dbReference type="FunFam" id="1.10.510.10:FF:000523">
    <property type="entry name" value="Serine/threonine-protein kinase PITSLRE"/>
    <property type="match status" value="1"/>
</dbReference>
<dbReference type="Gene3D" id="3.30.200.20">
    <property type="entry name" value="Phosphorylase Kinase, domain 1"/>
    <property type="match status" value="1"/>
</dbReference>
<dbReference type="Gene3D" id="1.10.510.10">
    <property type="entry name" value="Transferase(Phosphotransferase) domain 1"/>
    <property type="match status" value="1"/>
</dbReference>
<dbReference type="InterPro" id="IPR050108">
    <property type="entry name" value="CDK"/>
</dbReference>
<dbReference type="InterPro" id="IPR045267">
    <property type="entry name" value="CDK11/PITSLRE_STKc"/>
</dbReference>
<dbReference type="InterPro" id="IPR011009">
    <property type="entry name" value="Kinase-like_dom_sf"/>
</dbReference>
<dbReference type="InterPro" id="IPR000719">
    <property type="entry name" value="Prot_kinase_dom"/>
</dbReference>
<dbReference type="InterPro" id="IPR008271">
    <property type="entry name" value="Ser/Thr_kinase_AS"/>
</dbReference>
<dbReference type="PANTHER" id="PTHR24056">
    <property type="entry name" value="CELL DIVISION PROTEIN KINASE"/>
    <property type="match status" value="1"/>
</dbReference>
<dbReference type="PANTHER" id="PTHR24056:SF107">
    <property type="entry name" value="CYCLIN-DEPENDENT KINASE 11A-RELATED"/>
    <property type="match status" value="1"/>
</dbReference>
<dbReference type="Pfam" id="PF00069">
    <property type="entry name" value="Pkinase"/>
    <property type="match status" value="1"/>
</dbReference>
<dbReference type="SMART" id="SM00220">
    <property type="entry name" value="S_TKc"/>
    <property type="match status" value="1"/>
</dbReference>
<dbReference type="SUPFAM" id="SSF56112">
    <property type="entry name" value="Protein kinase-like (PK-like)"/>
    <property type="match status" value="1"/>
</dbReference>
<dbReference type="PROSITE" id="PS50011">
    <property type="entry name" value="PROTEIN_KINASE_DOM"/>
    <property type="match status" value="1"/>
</dbReference>
<dbReference type="PROSITE" id="PS00108">
    <property type="entry name" value="PROTEIN_KINASE_ST"/>
    <property type="match status" value="1"/>
</dbReference>
<accession>Q9VPC0</accession>
<accession>Q5U100</accession>
<accession>Q8MQR7</accession>
<accession>Q94889</accession>
<accession>Q9TXB3</accession>
<keyword id="KW-0067">ATP-binding</keyword>
<keyword id="KW-0131">Cell cycle</keyword>
<keyword id="KW-0418">Kinase</keyword>
<keyword id="KW-0547">Nucleotide-binding</keyword>
<keyword id="KW-0539">Nucleus</keyword>
<keyword id="KW-0597">Phosphoprotein</keyword>
<keyword id="KW-1185">Reference proteome</keyword>
<keyword id="KW-0723">Serine/threonine-protein kinase</keyword>
<keyword id="KW-0808">Transferase</keyword>
<protein>
    <recommendedName>
        <fullName>Serine/threonine-protein kinase PITSLRE</fullName>
        <ecNumber>2.7.11.22</ecNumber>
    </recommendedName>
    <alternativeName>
        <fullName>Cell division cycle 2-like</fullName>
    </alternativeName>
</protein>
<sequence length="952" mass="108838">MVNSSGSEDGQLRSPNDVHYHSRGEEDEHEGDADALYIQPPQASRESGSGPRREKKKHSRERRRHKERDDVGGAALALERDHRYDYRSREEHYHHHQRERSSNAAAAYAKHHLGHAYHYPQPPQQQQQPLPPAPSYAAHHYHHHQHLSGARAAPREYHSYPSGYHSGSRHGDYPMEEPTRRSSKYAESKDAESLEQDLRSRLLKKRHNYVKDYETEENYEHRVERSDRREGGRKERERTVRSTHKQNRHDRVIELLDSPEQEHHHQHQHKSHRSKWREEVEVIRRKVPEDLELLARREKLLAAERESRQRKQTAREELEARRELLRERNEHSDALSPTTVAASVTAGLNIHVKRKSKPDNYEKEIKLKKRREDDIEVIRDDDDEESEESDSNEEVPEQDSEGSATESGSEDSYASKKKSKIKSKSQLEDDDEDLPLPDSPLSVGELYKSPKQRQRSRSVSSKSSSQSSRSSRSRSRSRSQSSLEDEVDRQDVGADASPSSSTRSEERGMTQEQPEEKPEEKLKEKQKSLEEQIPCDDKGIPLPNYYPGVQGCRSVEEFQCLNRIEEGTYGVVYRAKDKRTNEIVALKRLKMEKEKEGFPITSLREINTLLKGQHPNIVTVREIVVGSNMDKIFIVMDYVEHDLKSLMETMKNRKQSFFPGEVKCLTQQLLRAVAHLHDNWILHRDLKTSNLLLSHKGILKVGDFGLAREYGSPIKKYTSLVVTLWYRAPELLLCSPVYSTPIDVWSVGCIFAEFLQMLPLFPGKSEIDELNRIFKELGTPNEKIWPGYTELPAVKNMLSQNSQFTEYPVSQLRKHFQEKTSEMGLSLLQGLLTYDPKQRLSADAALKHGFFKELPLPIDPSMFPTWPAKSELGARKAQASSPKPPSGGSQFKQLGRDEPIIVGPGNKLSSGIITGNKKSHGAGGSSASTGFVLNAGITQRQLAMGPGFSLKF</sequence>
<evidence type="ECO:0000250" key="1"/>
<evidence type="ECO:0000255" key="2"/>
<evidence type="ECO:0000255" key="3">
    <source>
        <dbReference type="PROSITE-ProRule" id="PRU00159"/>
    </source>
</evidence>
<evidence type="ECO:0000255" key="4">
    <source>
        <dbReference type="PROSITE-ProRule" id="PRU10027"/>
    </source>
</evidence>
<evidence type="ECO:0000256" key="5">
    <source>
        <dbReference type="SAM" id="MobiDB-lite"/>
    </source>
</evidence>
<evidence type="ECO:0000269" key="6">
    <source>
    </source>
</evidence>
<evidence type="ECO:0000269" key="7">
    <source>
    </source>
</evidence>
<evidence type="ECO:0000305" key="8"/>
<feature type="chain" id="PRO_0000086160" description="Serine/threonine-protein kinase PITSLRE">
    <location>
        <begin position="1"/>
        <end position="952"/>
    </location>
</feature>
<feature type="domain" description="Protein kinase" evidence="3">
    <location>
        <begin position="558"/>
        <end position="851"/>
    </location>
</feature>
<feature type="region of interest" description="Disordered" evidence="5">
    <location>
        <begin position="1"/>
        <end position="196"/>
    </location>
</feature>
<feature type="region of interest" description="Disordered" evidence="5">
    <location>
        <begin position="216"/>
        <end position="247"/>
    </location>
</feature>
<feature type="region of interest" description="Disordered" evidence="5">
    <location>
        <begin position="302"/>
        <end position="538"/>
    </location>
</feature>
<feature type="region of interest" description="Disordered" evidence="5">
    <location>
        <begin position="870"/>
        <end position="906"/>
    </location>
</feature>
<feature type="short sequence motif" description="Nuclear localization signal" evidence="2">
    <location>
        <begin position="51"/>
        <end position="56"/>
    </location>
</feature>
<feature type="compositionally biased region" description="Basic and acidic residues" evidence="5">
    <location>
        <begin position="16"/>
        <end position="26"/>
    </location>
</feature>
<feature type="compositionally biased region" description="Basic residues" evidence="5">
    <location>
        <begin position="53"/>
        <end position="66"/>
    </location>
</feature>
<feature type="compositionally biased region" description="Basic and acidic residues" evidence="5">
    <location>
        <begin position="78"/>
        <end position="93"/>
    </location>
</feature>
<feature type="compositionally biased region" description="Basic and acidic residues" evidence="5">
    <location>
        <begin position="169"/>
        <end position="196"/>
    </location>
</feature>
<feature type="compositionally biased region" description="Basic and acidic residues" evidence="5">
    <location>
        <begin position="216"/>
        <end position="240"/>
    </location>
</feature>
<feature type="compositionally biased region" description="Basic and acidic residues" evidence="5">
    <location>
        <begin position="302"/>
        <end position="333"/>
    </location>
</feature>
<feature type="compositionally biased region" description="Basic and acidic residues" evidence="5">
    <location>
        <begin position="357"/>
        <end position="378"/>
    </location>
</feature>
<feature type="compositionally biased region" description="Acidic residues" evidence="5">
    <location>
        <begin position="379"/>
        <end position="400"/>
    </location>
</feature>
<feature type="compositionally biased region" description="Polar residues" evidence="5">
    <location>
        <begin position="401"/>
        <end position="412"/>
    </location>
</feature>
<feature type="compositionally biased region" description="Low complexity" evidence="5">
    <location>
        <begin position="457"/>
        <end position="470"/>
    </location>
</feature>
<feature type="compositionally biased region" description="Basic and acidic residues" evidence="5">
    <location>
        <begin position="503"/>
        <end position="538"/>
    </location>
</feature>
<feature type="active site" description="Proton acceptor" evidence="3 4">
    <location>
        <position position="685"/>
    </location>
</feature>
<feature type="binding site" evidence="3">
    <location>
        <begin position="564"/>
        <end position="572"/>
    </location>
    <ligand>
        <name>ATP</name>
        <dbReference type="ChEBI" id="CHEBI:30616"/>
    </ligand>
</feature>
<feature type="binding site" evidence="3">
    <location>
        <position position="587"/>
    </location>
    <ligand>
        <name>ATP</name>
        <dbReference type="ChEBI" id="CHEBI:30616"/>
    </ligand>
</feature>
<feature type="modified residue" description="Phosphoserine" evidence="6">
    <location>
        <position position="439"/>
    </location>
</feature>
<feature type="modified residue" description="Phosphoserine" evidence="6">
    <location>
        <position position="442"/>
    </location>
</feature>
<feature type="modified residue" description="Phosphotyrosine" evidence="6">
    <location>
        <position position="447"/>
    </location>
</feature>
<feature type="modified residue" description="Phosphoserine" evidence="6">
    <location>
        <position position="449"/>
    </location>
</feature>
<feature type="modified residue" description="Phosphoserine" evidence="6">
    <location>
        <position position="881"/>
    </location>
</feature>
<feature type="modified residue" description="Phosphoserine" evidence="6">
    <location>
        <position position="886"/>
    </location>
</feature>
<feature type="sequence conflict" description="In Ref. 1; CAA67863." evidence="8" ref="1">
    <original>D</original>
    <variation>E</variation>
    <location>
        <position position="69"/>
    </location>
</feature>
<feature type="sequence conflict" description="In Ref. 1; CAA67863." evidence="8" ref="1">
    <original>V</original>
    <variation>A</variation>
    <location>
        <position position="223"/>
    </location>
</feature>
<feature type="sequence conflict" description="In Ref. 1; CAA67863." evidence="8" ref="1">
    <original>I</original>
    <variation>S</variation>
    <location>
        <position position="283"/>
    </location>
</feature>
<feature type="sequence conflict" description="In Ref. 1; CAA67863." evidence="8" ref="1">
    <original>V</original>
    <variation>A</variation>
    <location>
        <position position="492"/>
    </location>
</feature>
<feature type="sequence conflict" description="In Ref. 6." evidence="8" ref="6">
    <original>V</original>
    <variation>E</variation>
    <location>
        <position position="584"/>
    </location>
</feature>
<feature type="sequence conflict" description="In Ref. 6." evidence="8" ref="6">
    <original>L</original>
    <variation>R</variation>
    <location>
        <position position="603"/>
    </location>
</feature>
<feature type="sequence conflict" description="In Ref. 6." evidence="8" ref="6">
    <original>G</original>
    <variation>GG</variation>
    <location>
        <position position="612"/>
    </location>
</feature>
<feature type="sequence conflict" description="In Ref. 6." evidence="8" ref="6">
    <location>
        <position position="670"/>
    </location>
</feature>
<feature type="sequence conflict" description="In Ref. 6." evidence="8" ref="6">
    <location>
        <position position="680"/>
    </location>
</feature>
<feature type="sequence conflict" description="In Ref. 6." evidence="8" ref="6">
    <location>
        <position position="717"/>
    </location>
</feature>
<proteinExistence type="evidence at protein level"/>
<gene>
    <name type="primary">Pitslre</name>
    <name type="ORF">CG4268</name>
</gene>
<reference key="1">
    <citation type="journal article" date="1996" name="Mol. Biol. Cell">
        <title>Novel members of the cdc2-related kinase family in Drosophila: cdk4/6, cdk5, PFTAIRE, and PITSLRE kinase.</title>
        <authorList>
            <person name="Sauer K."/>
            <person name="Weigmann K."/>
            <person name="Sigrist S."/>
            <person name="Lehner C.F."/>
        </authorList>
    </citation>
    <scope>NUCLEOTIDE SEQUENCE [MRNA]</scope>
    <scope>TISSUE SPECIFICITY</scope>
    <scope>DEVELOPMENTAL STAGE</scope>
    <source>
        <tissue>Embryo</tissue>
    </source>
</reference>
<reference key="2">
    <citation type="journal article" date="2000" name="Science">
        <title>The genome sequence of Drosophila melanogaster.</title>
        <authorList>
            <person name="Adams M.D."/>
            <person name="Celniker S.E."/>
            <person name="Holt R.A."/>
            <person name="Evans C.A."/>
            <person name="Gocayne J.D."/>
            <person name="Amanatides P.G."/>
            <person name="Scherer S.E."/>
            <person name="Li P.W."/>
            <person name="Hoskins R.A."/>
            <person name="Galle R.F."/>
            <person name="George R.A."/>
            <person name="Lewis S.E."/>
            <person name="Richards S."/>
            <person name="Ashburner M."/>
            <person name="Henderson S.N."/>
            <person name="Sutton G.G."/>
            <person name="Wortman J.R."/>
            <person name="Yandell M.D."/>
            <person name="Zhang Q."/>
            <person name="Chen L.X."/>
            <person name="Brandon R.C."/>
            <person name="Rogers Y.-H.C."/>
            <person name="Blazej R.G."/>
            <person name="Champe M."/>
            <person name="Pfeiffer B.D."/>
            <person name="Wan K.H."/>
            <person name="Doyle C."/>
            <person name="Baxter E.G."/>
            <person name="Helt G."/>
            <person name="Nelson C.R."/>
            <person name="Miklos G.L.G."/>
            <person name="Abril J.F."/>
            <person name="Agbayani A."/>
            <person name="An H.-J."/>
            <person name="Andrews-Pfannkoch C."/>
            <person name="Baldwin D."/>
            <person name="Ballew R.M."/>
            <person name="Basu A."/>
            <person name="Baxendale J."/>
            <person name="Bayraktaroglu L."/>
            <person name="Beasley E.M."/>
            <person name="Beeson K.Y."/>
            <person name="Benos P.V."/>
            <person name="Berman B.P."/>
            <person name="Bhandari D."/>
            <person name="Bolshakov S."/>
            <person name="Borkova D."/>
            <person name="Botchan M.R."/>
            <person name="Bouck J."/>
            <person name="Brokstein P."/>
            <person name="Brottier P."/>
            <person name="Burtis K.C."/>
            <person name="Busam D.A."/>
            <person name="Butler H."/>
            <person name="Cadieu E."/>
            <person name="Center A."/>
            <person name="Chandra I."/>
            <person name="Cherry J.M."/>
            <person name="Cawley S."/>
            <person name="Dahlke C."/>
            <person name="Davenport L.B."/>
            <person name="Davies P."/>
            <person name="de Pablos B."/>
            <person name="Delcher A."/>
            <person name="Deng Z."/>
            <person name="Mays A.D."/>
            <person name="Dew I."/>
            <person name="Dietz S.M."/>
            <person name="Dodson K."/>
            <person name="Doup L.E."/>
            <person name="Downes M."/>
            <person name="Dugan-Rocha S."/>
            <person name="Dunkov B.C."/>
            <person name="Dunn P."/>
            <person name="Durbin K.J."/>
            <person name="Evangelista C.C."/>
            <person name="Ferraz C."/>
            <person name="Ferriera S."/>
            <person name="Fleischmann W."/>
            <person name="Fosler C."/>
            <person name="Gabrielian A.E."/>
            <person name="Garg N.S."/>
            <person name="Gelbart W.M."/>
            <person name="Glasser K."/>
            <person name="Glodek A."/>
            <person name="Gong F."/>
            <person name="Gorrell J.H."/>
            <person name="Gu Z."/>
            <person name="Guan P."/>
            <person name="Harris M."/>
            <person name="Harris N.L."/>
            <person name="Harvey D.A."/>
            <person name="Heiman T.J."/>
            <person name="Hernandez J.R."/>
            <person name="Houck J."/>
            <person name="Hostin D."/>
            <person name="Houston K.A."/>
            <person name="Howland T.J."/>
            <person name="Wei M.-H."/>
            <person name="Ibegwam C."/>
            <person name="Jalali M."/>
            <person name="Kalush F."/>
            <person name="Karpen G.H."/>
            <person name="Ke Z."/>
            <person name="Kennison J.A."/>
            <person name="Ketchum K.A."/>
            <person name="Kimmel B.E."/>
            <person name="Kodira C.D."/>
            <person name="Kraft C.L."/>
            <person name="Kravitz S."/>
            <person name="Kulp D."/>
            <person name="Lai Z."/>
            <person name="Lasko P."/>
            <person name="Lei Y."/>
            <person name="Levitsky A.A."/>
            <person name="Li J.H."/>
            <person name="Li Z."/>
            <person name="Liang Y."/>
            <person name="Lin X."/>
            <person name="Liu X."/>
            <person name="Mattei B."/>
            <person name="McIntosh T.C."/>
            <person name="McLeod M.P."/>
            <person name="McPherson D."/>
            <person name="Merkulov G."/>
            <person name="Milshina N.V."/>
            <person name="Mobarry C."/>
            <person name="Morris J."/>
            <person name="Moshrefi A."/>
            <person name="Mount S.M."/>
            <person name="Moy M."/>
            <person name="Murphy B."/>
            <person name="Murphy L."/>
            <person name="Muzny D.M."/>
            <person name="Nelson D.L."/>
            <person name="Nelson D.R."/>
            <person name="Nelson K.A."/>
            <person name="Nixon K."/>
            <person name="Nusskern D.R."/>
            <person name="Pacleb J.M."/>
            <person name="Palazzolo M."/>
            <person name="Pittman G.S."/>
            <person name="Pan S."/>
            <person name="Pollard J."/>
            <person name="Puri V."/>
            <person name="Reese M.G."/>
            <person name="Reinert K."/>
            <person name="Remington K."/>
            <person name="Saunders R.D.C."/>
            <person name="Scheeler F."/>
            <person name="Shen H."/>
            <person name="Shue B.C."/>
            <person name="Siden-Kiamos I."/>
            <person name="Simpson M."/>
            <person name="Skupski M.P."/>
            <person name="Smith T.J."/>
            <person name="Spier E."/>
            <person name="Spradling A.C."/>
            <person name="Stapleton M."/>
            <person name="Strong R."/>
            <person name="Sun E."/>
            <person name="Svirskas R."/>
            <person name="Tector C."/>
            <person name="Turner R."/>
            <person name="Venter E."/>
            <person name="Wang A.H."/>
            <person name="Wang X."/>
            <person name="Wang Z.-Y."/>
            <person name="Wassarman D.A."/>
            <person name="Weinstock G.M."/>
            <person name="Weissenbach J."/>
            <person name="Williams S.M."/>
            <person name="Woodage T."/>
            <person name="Worley K.C."/>
            <person name="Wu D."/>
            <person name="Yang S."/>
            <person name="Yao Q.A."/>
            <person name="Ye J."/>
            <person name="Yeh R.-F."/>
            <person name="Zaveri J.S."/>
            <person name="Zhan M."/>
            <person name="Zhang G."/>
            <person name="Zhao Q."/>
            <person name="Zheng L."/>
            <person name="Zheng X.H."/>
            <person name="Zhong F.N."/>
            <person name="Zhong W."/>
            <person name="Zhou X."/>
            <person name="Zhu S.C."/>
            <person name="Zhu X."/>
            <person name="Smith H.O."/>
            <person name="Gibbs R.A."/>
            <person name="Myers E.W."/>
            <person name="Rubin G.M."/>
            <person name="Venter J.C."/>
        </authorList>
    </citation>
    <scope>NUCLEOTIDE SEQUENCE [LARGE SCALE GENOMIC DNA]</scope>
    <source>
        <strain>Berkeley</strain>
    </source>
</reference>
<reference key="3">
    <citation type="journal article" date="2002" name="Genome Biol.">
        <title>Annotation of the Drosophila melanogaster euchromatic genome: a systematic review.</title>
        <authorList>
            <person name="Misra S."/>
            <person name="Crosby M.A."/>
            <person name="Mungall C.J."/>
            <person name="Matthews B.B."/>
            <person name="Campbell K.S."/>
            <person name="Hradecky P."/>
            <person name="Huang Y."/>
            <person name="Kaminker J.S."/>
            <person name="Millburn G.H."/>
            <person name="Prochnik S.E."/>
            <person name="Smith C.D."/>
            <person name="Tupy J.L."/>
            <person name="Whitfield E.J."/>
            <person name="Bayraktaroglu L."/>
            <person name="Berman B.P."/>
            <person name="Bettencourt B.R."/>
            <person name="Celniker S.E."/>
            <person name="de Grey A.D.N.J."/>
            <person name="Drysdale R.A."/>
            <person name="Harris N.L."/>
            <person name="Richter J."/>
            <person name="Russo S."/>
            <person name="Schroeder A.J."/>
            <person name="Shu S.Q."/>
            <person name="Stapleton M."/>
            <person name="Yamada C."/>
            <person name="Ashburner M."/>
            <person name="Gelbart W.M."/>
            <person name="Rubin G.M."/>
            <person name="Lewis S.E."/>
        </authorList>
    </citation>
    <scope>GENOME REANNOTATION</scope>
    <source>
        <strain>Berkeley</strain>
    </source>
</reference>
<reference key="4">
    <citation type="submission" date="2006-11" db="EMBL/GenBank/DDBJ databases">
        <authorList>
            <person name="Stapleton M."/>
            <person name="Carlson J.W."/>
            <person name="Frise E."/>
            <person name="Kapadia B."/>
            <person name="Park S."/>
            <person name="Wan K.H."/>
            <person name="Yu C."/>
            <person name="Celniker S.E."/>
        </authorList>
    </citation>
    <scope>NUCLEOTIDE SEQUENCE [LARGE SCALE MRNA]</scope>
    <source>
        <strain>Berkeley</strain>
        <tissue>Embryo</tissue>
    </source>
</reference>
<reference key="5">
    <citation type="journal article" date="2002" name="Genome Biol.">
        <title>A Drosophila full-length cDNA resource.</title>
        <authorList>
            <person name="Stapleton M."/>
            <person name="Carlson J.W."/>
            <person name="Brokstein P."/>
            <person name="Yu C."/>
            <person name="Champe M."/>
            <person name="George R.A."/>
            <person name="Guarin H."/>
            <person name="Kronmiller B."/>
            <person name="Pacleb J.M."/>
            <person name="Park S."/>
            <person name="Wan K.H."/>
            <person name="Rubin G.M."/>
            <person name="Celniker S.E."/>
        </authorList>
    </citation>
    <scope>NUCLEOTIDE SEQUENCE [LARGE SCALE MRNA] OF 22-952</scope>
    <source>
        <strain>Berkeley</strain>
        <tissue>Head</tissue>
    </source>
</reference>
<reference key="6">
    <citation type="journal article" date="1992" name="Proc. Natl. Acad. Sci. U.S.A.">
        <title>Primary structure, expression, and signal-dependent tyrosine phosphorylation of a Drosophila homolog of extracellular signal-regulated kinase.</title>
        <authorList>
            <person name="Biggs W.H. III"/>
            <person name="Zipursky S.L."/>
        </authorList>
    </citation>
    <scope>NUCLEOTIDE SEQUENCE [MRNA] OF 571-722</scope>
    <source>
        <tissue>Imaginal disk</tissue>
    </source>
</reference>
<reference key="7">
    <citation type="journal article" date="2008" name="J. Proteome Res.">
        <title>Phosphoproteome analysis of Drosophila melanogaster embryos.</title>
        <authorList>
            <person name="Zhai B."/>
            <person name="Villen J."/>
            <person name="Beausoleil S.A."/>
            <person name="Mintseris J."/>
            <person name="Gygi S.P."/>
        </authorList>
    </citation>
    <scope>PHOSPHORYLATION [LARGE SCALE ANALYSIS] AT SER-439; SER-442; TYR-447; SER-449; SER-881 AND SER-886</scope>
    <scope>IDENTIFICATION BY MASS SPECTROMETRY</scope>
    <source>
        <tissue>Embryo</tissue>
    </source>
</reference>
<name>KP58_DROME</name>
<comment type="function">
    <text evidence="1">Acts as a negative regulator of the normal cell cycle progression. May function in regulating proliferation by the phosphorylation and subsequent plasma membrane targeting of galactosyltransferase (By similarity).</text>
</comment>
<comment type="catalytic activity">
    <reaction>
        <text>L-seryl-[protein] + ATP = O-phospho-L-seryl-[protein] + ADP + H(+)</text>
        <dbReference type="Rhea" id="RHEA:17989"/>
        <dbReference type="Rhea" id="RHEA-COMP:9863"/>
        <dbReference type="Rhea" id="RHEA-COMP:11604"/>
        <dbReference type="ChEBI" id="CHEBI:15378"/>
        <dbReference type="ChEBI" id="CHEBI:29999"/>
        <dbReference type="ChEBI" id="CHEBI:30616"/>
        <dbReference type="ChEBI" id="CHEBI:83421"/>
        <dbReference type="ChEBI" id="CHEBI:456216"/>
        <dbReference type="EC" id="2.7.11.22"/>
    </reaction>
</comment>
<comment type="catalytic activity">
    <reaction>
        <text>L-threonyl-[protein] + ATP = O-phospho-L-threonyl-[protein] + ADP + H(+)</text>
        <dbReference type="Rhea" id="RHEA:46608"/>
        <dbReference type="Rhea" id="RHEA-COMP:11060"/>
        <dbReference type="Rhea" id="RHEA-COMP:11605"/>
        <dbReference type="ChEBI" id="CHEBI:15378"/>
        <dbReference type="ChEBI" id="CHEBI:30013"/>
        <dbReference type="ChEBI" id="CHEBI:30616"/>
        <dbReference type="ChEBI" id="CHEBI:61977"/>
        <dbReference type="ChEBI" id="CHEBI:456216"/>
        <dbReference type="EC" id="2.7.11.22"/>
    </reaction>
</comment>
<comment type="catalytic activity">
    <reaction>
        <text>L-tyrosyl-[protein] + ATP = O-phospho-L-tyrosyl-[protein] + ADP + H(+)</text>
        <dbReference type="Rhea" id="RHEA:10596"/>
        <dbReference type="Rhea" id="RHEA-COMP:10136"/>
        <dbReference type="Rhea" id="RHEA-COMP:20101"/>
        <dbReference type="ChEBI" id="CHEBI:15378"/>
        <dbReference type="ChEBI" id="CHEBI:30616"/>
        <dbReference type="ChEBI" id="CHEBI:46858"/>
        <dbReference type="ChEBI" id="CHEBI:61978"/>
        <dbReference type="ChEBI" id="CHEBI:456216"/>
    </reaction>
</comment>
<comment type="subcellular location">
    <subcellularLocation>
        <location evidence="8">Nucleus</location>
    </subcellularLocation>
</comment>
<comment type="tissue specificity">
    <text evidence="7">Present throughout the early embryo. In late embryos levels are highest in the CNS.</text>
</comment>
<comment type="developmental stage">
    <text evidence="7">Expressed both maternally and zygotically. Highest levels in early embryogenesis (0-6 hours), low levels during later embryogenesis, moderate levels in pupae and adults.</text>
</comment>
<comment type="similarity">
    <text evidence="8">Belongs to the protein kinase superfamily. CMGC Ser/Thr protein kinase family. CDC2/CDKX subfamily.</text>
</comment>
<comment type="sequence caution" evidence="8">
    <conflict type="miscellaneous discrepancy">
        <sequence resource="EMBL-CDS" id="AAM75018"/>
    </conflict>
    <text>Intron retention.</text>
</comment>